<sequence length="301" mass="33143">MTRHGKNCTAGAVYTYHEKKKDTAASGYGTQNIRLSRDAVKDFDCCCLSLQPCHDPVVTPDGYLYEREAILEYILHQKKEIARQMKAYEKQRGTRREEQKELQRAASQDHVRGFLEKESAIVSRPLNPFTAKALSGTSPDNAQPGPSVGPPSKDKDKVLPSFWIPSLTPEAKATKLEKPSRTVTCPMSGKPLRMSDLTPVHFTPLDSSVDRVGLITRSERYVCAVTRDSLSNATPCAVLRPSGAVVTLECVEKLIRKDMVDPVTGDKLTDRDIIVLQRGGTGFAGSGVKLQAEKSRPVMQA</sequence>
<accession>Q4R7H4</accession>
<evidence type="ECO:0000250" key="1"/>
<evidence type="ECO:0000250" key="2">
    <source>
        <dbReference type="UniProtKB" id="Q9D6T0"/>
    </source>
</evidence>
<evidence type="ECO:0000250" key="3">
    <source>
        <dbReference type="UniProtKB" id="Q9Y314"/>
    </source>
</evidence>
<evidence type="ECO:0000256" key="4">
    <source>
        <dbReference type="SAM" id="MobiDB-lite"/>
    </source>
</evidence>
<evidence type="ECO:0000305" key="5"/>
<protein>
    <recommendedName>
        <fullName>Nitric oxide synthase-interacting protein</fullName>
    </recommendedName>
    <alternativeName>
        <fullName>E3 ubiquitin-protein ligase NOSIP</fullName>
        <ecNumber>2.3.2.27</ecNumber>
    </alternativeName>
    <alternativeName>
        <fullName evidence="5">RING-type E3 ubiquitin transferase NOSIP</fullName>
    </alternativeName>
</protein>
<name>NOSIP_MACFA</name>
<comment type="function">
    <text evidence="2 3">E3 ubiquitin-protein ligase that is essential for proper development of the forebrain, the eye, and the face. Catalyzes monoubiquitination of serine/threonine-protein phosphatase 2A (PP2A) catalytic subunit PPP2CA/PPP2CB (By similarity). Negatively regulates nitric oxide production by inducing NOS1 and NOS3 translocation to actin cytoskeleton and inhibiting their enzymatic activity (By similarity).</text>
</comment>
<comment type="catalytic activity">
    <reaction>
        <text>S-ubiquitinyl-[E2 ubiquitin-conjugating enzyme]-L-cysteine + [acceptor protein]-L-lysine = [E2 ubiquitin-conjugating enzyme]-L-cysteine + N(6)-ubiquitinyl-[acceptor protein]-L-lysine.</text>
        <dbReference type="EC" id="2.3.2.27"/>
    </reaction>
</comment>
<comment type="subunit">
    <text evidence="2 3">Interacts with NOS1 and NOS3 (By similarity). Interacts with PP2A holoenzyme, containing PPP2CA, PPP2CB, PPP2R1A and PPP2R2A subunits (By similarity).</text>
</comment>
<comment type="subcellular location">
    <subcellularLocation>
        <location evidence="3">Cytoplasm</location>
    </subcellularLocation>
    <subcellularLocation>
        <location evidence="3">Nucleus</location>
    </subcellularLocation>
    <text evidence="3">Translocates from nucleus to cytoplasm in the G2 phase of the cell cycle.</text>
</comment>
<comment type="domain">
    <text>The U-box-like region is a truncated U-box domain. It is unknown whether it is functional or not.</text>
</comment>
<comment type="similarity">
    <text evidence="5">Belongs to the NOSIP family.</text>
</comment>
<dbReference type="EC" id="2.3.2.27"/>
<dbReference type="EMBL" id="AB168844">
    <property type="protein sequence ID" value="BAE00948.1"/>
    <property type="molecule type" value="mRNA"/>
</dbReference>
<dbReference type="RefSeq" id="NP_001271485.1">
    <property type="nucleotide sequence ID" value="NM_001284556.1"/>
</dbReference>
<dbReference type="RefSeq" id="XP_045235939.2">
    <property type="nucleotide sequence ID" value="XM_045380004.2"/>
</dbReference>
<dbReference type="SMR" id="Q4R7H4"/>
<dbReference type="STRING" id="9541.ENSMFAP00000015924"/>
<dbReference type="GeneID" id="102130453"/>
<dbReference type="VEuPathDB" id="HostDB:ENSMFAG00000031153"/>
<dbReference type="eggNOG" id="KOG3039">
    <property type="taxonomic scope" value="Eukaryota"/>
</dbReference>
<dbReference type="OMA" id="PCVTKFM"/>
<dbReference type="OrthoDB" id="116827at2759"/>
<dbReference type="Proteomes" id="UP000233100">
    <property type="component" value="Chromosome 19"/>
</dbReference>
<dbReference type="GO" id="GO:0005737">
    <property type="term" value="C:cytoplasm"/>
    <property type="evidence" value="ECO:0007669"/>
    <property type="project" value="UniProtKB-SubCell"/>
</dbReference>
<dbReference type="GO" id="GO:0005634">
    <property type="term" value="C:nucleus"/>
    <property type="evidence" value="ECO:0007669"/>
    <property type="project" value="UniProtKB-SubCell"/>
</dbReference>
<dbReference type="GO" id="GO:0061630">
    <property type="term" value="F:ubiquitin protein ligase activity"/>
    <property type="evidence" value="ECO:0007669"/>
    <property type="project" value="InterPro"/>
</dbReference>
<dbReference type="CDD" id="cd16661">
    <property type="entry name" value="RING-Ubox1_NOSIP"/>
    <property type="match status" value="1"/>
</dbReference>
<dbReference type="CDD" id="cd16662">
    <property type="entry name" value="RING-Ubox2_NOSIP"/>
    <property type="match status" value="1"/>
</dbReference>
<dbReference type="FunFam" id="3.30.40.10:FF:000251">
    <property type="entry name" value="Nitric oxide synthase-interacting protein"/>
    <property type="match status" value="1"/>
</dbReference>
<dbReference type="FunFam" id="3.30.40.10:FF:001144">
    <property type="entry name" value="Nitric oxide synthase-interacting protein"/>
    <property type="match status" value="1"/>
</dbReference>
<dbReference type="Gene3D" id="3.30.40.10">
    <property type="entry name" value="Zinc/RING finger domain, C3HC4 (zinc finger)"/>
    <property type="match status" value="2"/>
</dbReference>
<dbReference type="InterPro" id="IPR016818">
    <property type="entry name" value="NOSIP"/>
</dbReference>
<dbReference type="InterPro" id="IPR031790">
    <property type="entry name" value="Znf-NOSIP"/>
</dbReference>
<dbReference type="InterPro" id="IPR013083">
    <property type="entry name" value="Znf_RING/FYVE/PHD"/>
</dbReference>
<dbReference type="PANTHER" id="PTHR13063">
    <property type="entry name" value="ENOS INTERACTING PROTEIN"/>
    <property type="match status" value="1"/>
</dbReference>
<dbReference type="PANTHER" id="PTHR13063:SF10">
    <property type="entry name" value="NITRIC OXIDE SYNTHASE-INTERACTING PROTEIN"/>
    <property type="match status" value="1"/>
</dbReference>
<dbReference type="Pfam" id="PF15906">
    <property type="entry name" value="zf-NOSIP"/>
    <property type="match status" value="1"/>
</dbReference>
<dbReference type="PIRSF" id="PIRSF023577">
    <property type="entry name" value="ENOS_interacting"/>
    <property type="match status" value="1"/>
</dbReference>
<dbReference type="SUPFAM" id="SSF57850">
    <property type="entry name" value="RING/U-box"/>
    <property type="match status" value="2"/>
</dbReference>
<keyword id="KW-0963">Cytoplasm</keyword>
<keyword id="KW-0217">Developmental protein</keyword>
<keyword id="KW-0539">Nucleus</keyword>
<keyword id="KW-0597">Phosphoprotein</keyword>
<keyword id="KW-1185">Reference proteome</keyword>
<keyword id="KW-0808">Transferase</keyword>
<keyword id="KW-0833">Ubl conjugation pathway</keyword>
<organism>
    <name type="scientific">Macaca fascicularis</name>
    <name type="common">Crab-eating macaque</name>
    <name type="synonym">Cynomolgus monkey</name>
    <dbReference type="NCBI Taxonomy" id="9541"/>
    <lineage>
        <taxon>Eukaryota</taxon>
        <taxon>Metazoa</taxon>
        <taxon>Chordata</taxon>
        <taxon>Craniata</taxon>
        <taxon>Vertebrata</taxon>
        <taxon>Euteleostomi</taxon>
        <taxon>Mammalia</taxon>
        <taxon>Eutheria</taxon>
        <taxon>Euarchontoglires</taxon>
        <taxon>Primates</taxon>
        <taxon>Haplorrhini</taxon>
        <taxon>Catarrhini</taxon>
        <taxon>Cercopithecidae</taxon>
        <taxon>Cercopithecinae</taxon>
        <taxon>Macaca</taxon>
    </lineage>
</organism>
<reference key="1">
    <citation type="submission" date="2005-06" db="EMBL/GenBank/DDBJ databases">
        <title>DNA sequences of macaque genes expressed in brain or testis and its evolutionary implications.</title>
        <authorList>
            <consortium name="International consortium for macaque cDNA sequencing and analysis"/>
        </authorList>
    </citation>
    <scope>NUCLEOTIDE SEQUENCE [LARGE SCALE MRNA]</scope>
    <source>
        <tissue>Testis</tissue>
    </source>
</reference>
<proteinExistence type="evidence at transcript level"/>
<gene>
    <name type="primary">NOSIP</name>
    <name type="ORF">QtsA-15334</name>
</gene>
<feature type="chain" id="PRO_0000280586" description="Nitric oxide synthase-interacting protein">
    <location>
        <begin position="1"/>
        <end position="301"/>
    </location>
</feature>
<feature type="region of interest" description="U-box-like">
    <location>
        <begin position="55"/>
        <end position="75"/>
    </location>
</feature>
<feature type="region of interest" description="Disordered" evidence="4">
    <location>
        <begin position="131"/>
        <end position="155"/>
    </location>
</feature>
<feature type="short sequence motif" description="Nuclear localization signal" evidence="1">
    <location>
        <begin position="78"/>
        <end position="101"/>
    </location>
</feature>
<feature type="modified residue" description="Phosphoserine" evidence="3">
    <location>
        <position position="36"/>
    </location>
</feature>
<feature type="modified residue" description="Phosphoserine" evidence="3">
    <location>
        <position position="107"/>
    </location>
</feature>